<protein>
    <recommendedName>
        <fullName evidence="1">Bifunctional purine biosynthesis protein PurH</fullName>
    </recommendedName>
    <domain>
        <recommendedName>
            <fullName evidence="1">Phosphoribosylaminoimidazolecarboxamide formyltransferase</fullName>
            <ecNumber evidence="1">2.1.2.3</ecNumber>
        </recommendedName>
        <alternativeName>
            <fullName evidence="1">AICAR transformylase</fullName>
        </alternativeName>
    </domain>
    <domain>
        <recommendedName>
            <fullName evidence="1">IMP cyclohydrolase</fullName>
            <ecNumber evidence="1">3.5.4.10</ecNumber>
        </recommendedName>
        <alternativeName>
            <fullName evidence="1">ATIC</fullName>
        </alternativeName>
        <alternativeName>
            <fullName evidence="1">IMP synthase</fullName>
        </alternativeName>
        <alternativeName>
            <fullName evidence="1">Inosinicase</fullName>
        </alternativeName>
    </domain>
</protein>
<name>PUR9_LACLM</name>
<dbReference type="EC" id="2.1.2.3" evidence="1"/>
<dbReference type="EC" id="3.5.4.10" evidence="1"/>
<dbReference type="EMBL" id="AM406671">
    <property type="protein sequence ID" value="CAL97587.1"/>
    <property type="molecule type" value="Genomic_DNA"/>
</dbReference>
<dbReference type="RefSeq" id="WP_011834927.1">
    <property type="nucleotide sequence ID" value="NC_009004.1"/>
</dbReference>
<dbReference type="SMR" id="A2RJY0"/>
<dbReference type="STRING" id="416870.llmg_0994"/>
<dbReference type="KEGG" id="llm:llmg_0994"/>
<dbReference type="eggNOG" id="COG0138">
    <property type="taxonomic scope" value="Bacteria"/>
</dbReference>
<dbReference type="HOGENOM" id="CLU_016316_5_2_9"/>
<dbReference type="OrthoDB" id="9802065at2"/>
<dbReference type="PhylomeDB" id="A2RJY0"/>
<dbReference type="UniPathway" id="UPA00074">
    <property type="reaction ID" value="UER00133"/>
</dbReference>
<dbReference type="UniPathway" id="UPA00074">
    <property type="reaction ID" value="UER00135"/>
</dbReference>
<dbReference type="Proteomes" id="UP000000364">
    <property type="component" value="Chromosome"/>
</dbReference>
<dbReference type="GO" id="GO:0005829">
    <property type="term" value="C:cytosol"/>
    <property type="evidence" value="ECO:0007669"/>
    <property type="project" value="TreeGrafter"/>
</dbReference>
<dbReference type="GO" id="GO:0003937">
    <property type="term" value="F:IMP cyclohydrolase activity"/>
    <property type="evidence" value="ECO:0007669"/>
    <property type="project" value="UniProtKB-UniRule"/>
</dbReference>
<dbReference type="GO" id="GO:0004643">
    <property type="term" value="F:phosphoribosylaminoimidazolecarboxamide formyltransferase activity"/>
    <property type="evidence" value="ECO:0007669"/>
    <property type="project" value="UniProtKB-UniRule"/>
</dbReference>
<dbReference type="GO" id="GO:0006189">
    <property type="term" value="P:'de novo' IMP biosynthetic process"/>
    <property type="evidence" value="ECO:0007669"/>
    <property type="project" value="UniProtKB-UniRule"/>
</dbReference>
<dbReference type="CDD" id="cd01421">
    <property type="entry name" value="IMPCH"/>
    <property type="match status" value="1"/>
</dbReference>
<dbReference type="FunFam" id="3.40.140.20:FF:000001">
    <property type="entry name" value="Bifunctional purine biosynthesis protein PurH"/>
    <property type="match status" value="1"/>
</dbReference>
<dbReference type="FunFam" id="3.40.140.20:FF:000002">
    <property type="entry name" value="Bifunctional purine biosynthesis protein PurH"/>
    <property type="match status" value="1"/>
</dbReference>
<dbReference type="FunFam" id="3.40.50.1380:FF:000001">
    <property type="entry name" value="Bifunctional purine biosynthesis protein PurH"/>
    <property type="match status" value="1"/>
</dbReference>
<dbReference type="Gene3D" id="3.40.140.20">
    <property type="match status" value="2"/>
</dbReference>
<dbReference type="Gene3D" id="3.40.50.1380">
    <property type="entry name" value="Methylglyoxal synthase-like domain"/>
    <property type="match status" value="1"/>
</dbReference>
<dbReference type="HAMAP" id="MF_00139">
    <property type="entry name" value="PurH"/>
    <property type="match status" value="1"/>
</dbReference>
<dbReference type="InterPro" id="IPR024051">
    <property type="entry name" value="AICAR_Tfase_dup_dom_sf"/>
</dbReference>
<dbReference type="InterPro" id="IPR016193">
    <property type="entry name" value="Cytidine_deaminase-like"/>
</dbReference>
<dbReference type="InterPro" id="IPR011607">
    <property type="entry name" value="MGS-like_dom"/>
</dbReference>
<dbReference type="InterPro" id="IPR036914">
    <property type="entry name" value="MGS-like_dom_sf"/>
</dbReference>
<dbReference type="InterPro" id="IPR002695">
    <property type="entry name" value="PurH-like"/>
</dbReference>
<dbReference type="NCBIfam" id="NF002049">
    <property type="entry name" value="PRK00881.1"/>
    <property type="match status" value="1"/>
</dbReference>
<dbReference type="NCBIfam" id="TIGR00355">
    <property type="entry name" value="purH"/>
    <property type="match status" value="1"/>
</dbReference>
<dbReference type="PANTHER" id="PTHR11692:SF0">
    <property type="entry name" value="BIFUNCTIONAL PURINE BIOSYNTHESIS PROTEIN ATIC"/>
    <property type="match status" value="1"/>
</dbReference>
<dbReference type="PANTHER" id="PTHR11692">
    <property type="entry name" value="BIFUNCTIONAL PURINE BIOSYNTHESIS PROTEIN PURH"/>
    <property type="match status" value="1"/>
</dbReference>
<dbReference type="Pfam" id="PF01808">
    <property type="entry name" value="AICARFT_IMPCHas"/>
    <property type="match status" value="1"/>
</dbReference>
<dbReference type="Pfam" id="PF02142">
    <property type="entry name" value="MGS"/>
    <property type="match status" value="1"/>
</dbReference>
<dbReference type="PIRSF" id="PIRSF000414">
    <property type="entry name" value="AICARFT_IMPCHas"/>
    <property type="match status" value="1"/>
</dbReference>
<dbReference type="SMART" id="SM00798">
    <property type="entry name" value="AICARFT_IMPCHas"/>
    <property type="match status" value="1"/>
</dbReference>
<dbReference type="SMART" id="SM00851">
    <property type="entry name" value="MGS"/>
    <property type="match status" value="1"/>
</dbReference>
<dbReference type="SUPFAM" id="SSF53927">
    <property type="entry name" value="Cytidine deaminase-like"/>
    <property type="match status" value="1"/>
</dbReference>
<dbReference type="SUPFAM" id="SSF52335">
    <property type="entry name" value="Methylglyoxal synthase-like"/>
    <property type="match status" value="1"/>
</dbReference>
<dbReference type="PROSITE" id="PS51855">
    <property type="entry name" value="MGS"/>
    <property type="match status" value="1"/>
</dbReference>
<organism>
    <name type="scientific">Lactococcus lactis subsp. cremoris (strain MG1363)</name>
    <dbReference type="NCBI Taxonomy" id="416870"/>
    <lineage>
        <taxon>Bacteria</taxon>
        <taxon>Bacillati</taxon>
        <taxon>Bacillota</taxon>
        <taxon>Bacilli</taxon>
        <taxon>Lactobacillales</taxon>
        <taxon>Streptococcaceae</taxon>
        <taxon>Lactococcus</taxon>
        <taxon>Lactococcus cremoris subsp. cremoris</taxon>
    </lineage>
</organism>
<keyword id="KW-0378">Hydrolase</keyword>
<keyword id="KW-0511">Multifunctional enzyme</keyword>
<keyword id="KW-0658">Purine biosynthesis</keyword>
<keyword id="KW-0808">Transferase</keyword>
<feature type="chain" id="PRO_1000018900" description="Bifunctional purine biosynthesis protein PurH">
    <location>
        <begin position="1"/>
        <end position="518"/>
    </location>
</feature>
<feature type="domain" description="MGS-like" evidence="2">
    <location>
        <begin position="1"/>
        <end position="144"/>
    </location>
</feature>
<accession>A2RJY0</accession>
<gene>
    <name evidence="1" type="primary">purH</name>
    <name type="ordered locus">llmg_0994</name>
</gene>
<reference key="1">
    <citation type="journal article" date="2007" name="J. Bacteriol.">
        <title>The complete genome sequence of the lactic acid bacterial paradigm Lactococcus lactis subsp. cremoris MG1363.</title>
        <authorList>
            <person name="Wegmann U."/>
            <person name="O'Connell-Motherway M."/>
            <person name="Zomer A."/>
            <person name="Buist G."/>
            <person name="Shearman C."/>
            <person name="Canchaya C."/>
            <person name="Ventura M."/>
            <person name="Goesmann A."/>
            <person name="Gasson M.J."/>
            <person name="Kuipers O.P."/>
            <person name="van Sinderen D."/>
            <person name="Kok J."/>
        </authorList>
    </citation>
    <scope>NUCLEOTIDE SEQUENCE [LARGE SCALE GENOMIC DNA]</scope>
    <source>
        <strain>MG1363</strain>
    </source>
</reference>
<sequence length="518" mass="57158">MSKRALISVSDKEGIVEFAKKIQELGWEIISTGGTKAVLDQEEIPNIAIDEVTGFPEMMDGRVKTLHPLIHGALLGRRDLDSHMKSMAEHHISPIDLVVVNLYPFKETLLAGGSQAEMIEKIDIGGPSMLRSAAKNHAAVTVVCDPMDYEKVEKELSADGETSLELRQQLAAKVFRHTASYDALIAQYLTEEFPVEDTKPEKLTLTYDLKQGMRYGENPQQSADFYESGLPTTYSIAQSHQLHGKELSYNNVRDADAALQIARDFDEPTVVALKHMNPCGIGTAKNIEQAWDYAYEADPVSIFGGIIVLNREVTEETAQKMSKIFLEIIIAPSYSKEALEILSKKKNIRLLTVDFSKKEQSEKEALVTGVLGGLLVQNQDVIVENPKEWTVATKVQPTDRQMEAMKFAWKAVKFVKSNGIIVTNDHQTLGVGPGQTNRVGSVKIALEATADKDALLQENAVLGSDAFFPFADNIDEIAKAGIKAIVQPGGSVRDQEVIEACDKYGIAMVFTGLRHFRH</sequence>
<evidence type="ECO:0000255" key="1">
    <source>
        <dbReference type="HAMAP-Rule" id="MF_00139"/>
    </source>
</evidence>
<evidence type="ECO:0000255" key="2">
    <source>
        <dbReference type="PROSITE-ProRule" id="PRU01202"/>
    </source>
</evidence>
<proteinExistence type="inferred from homology"/>
<comment type="catalytic activity">
    <reaction evidence="1">
        <text>(6R)-10-formyltetrahydrofolate + 5-amino-1-(5-phospho-beta-D-ribosyl)imidazole-4-carboxamide = 5-formamido-1-(5-phospho-D-ribosyl)imidazole-4-carboxamide + (6S)-5,6,7,8-tetrahydrofolate</text>
        <dbReference type="Rhea" id="RHEA:22192"/>
        <dbReference type="ChEBI" id="CHEBI:57453"/>
        <dbReference type="ChEBI" id="CHEBI:58467"/>
        <dbReference type="ChEBI" id="CHEBI:58475"/>
        <dbReference type="ChEBI" id="CHEBI:195366"/>
        <dbReference type="EC" id="2.1.2.3"/>
    </reaction>
</comment>
<comment type="catalytic activity">
    <reaction evidence="1">
        <text>IMP + H2O = 5-formamido-1-(5-phospho-D-ribosyl)imidazole-4-carboxamide</text>
        <dbReference type="Rhea" id="RHEA:18445"/>
        <dbReference type="ChEBI" id="CHEBI:15377"/>
        <dbReference type="ChEBI" id="CHEBI:58053"/>
        <dbReference type="ChEBI" id="CHEBI:58467"/>
        <dbReference type="EC" id="3.5.4.10"/>
    </reaction>
</comment>
<comment type="pathway">
    <text evidence="1">Purine metabolism; IMP biosynthesis via de novo pathway; 5-formamido-1-(5-phospho-D-ribosyl)imidazole-4-carboxamide from 5-amino-1-(5-phospho-D-ribosyl)imidazole-4-carboxamide (10-formyl THF route): step 1/1.</text>
</comment>
<comment type="pathway">
    <text evidence="1">Purine metabolism; IMP biosynthesis via de novo pathway; IMP from 5-formamido-1-(5-phospho-D-ribosyl)imidazole-4-carboxamide: step 1/1.</text>
</comment>
<comment type="domain">
    <text evidence="1">The IMP cyclohydrolase activity resides in the N-terminal region.</text>
</comment>
<comment type="similarity">
    <text evidence="1">Belongs to the PurH family.</text>
</comment>